<protein>
    <recommendedName>
        <fullName evidence="9">Tumor necrosis factor receptor superfamily member grnd</fullName>
    </recommendedName>
    <alternativeName>
        <fullName evidence="8 11">Protein grindelwald</fullName>
    </alternativeName>
</protein>
<keyword id="KW-0002">3D-structure</keyword>
<keyword id="KW-1003">Cell membrane</keyword>
<keyword id="KW-0968">Cytoplasmic vesicle</keyword>
<keyword id="KW-1015">Disulfide bond</keyword>
<keyword id="KW-0325">Glycoprotein</keyword>
<keyword id="KW-0472">Membrane</keyword>
<keyword id="KW-0675">Receptor</keyword>
<keyword id="KW-1185">Reference proteome</keyword>
<keyword id="KW-0732">Signal</keyword>
<keyword id="KW-0812">Transmembrane</keyword>
<keyword id="KW-1133">Transmembrane helix</keyword>
<feature type="signal peptide" evidence="1">
    <location>
        <begin position="1"/>
        <end position="27"/>
    </location>
</feature>
<feature type="chain" id="PRO_0000434595" description="Tumor necrosis factor receptor superfamily member grnd">
    <location>
        <begin position="28"/>
        <end position="241"/>
    </location>
</feature>
<feature type="topological domain" description="Extracellular" evidence="9">
    <location>
        <begin position="28"/>
        <end position="98"/>
    </location>
</feature>
<feature type="transmembrane region" description="Helical" evidence="1">
    <location>
        <begin position="99"/>
        <end position="119"/>
    </location>
</feature>
<feature type="topological domain" description="Cytoplasmic" evidence="9">
    <location>
        <begin position="120"/>
        <end position="241"/>
    </location>
</feature>
<feature type="glycosylation site" description="N-linked (GlcNAc...) asparagine" evidence="2">
    <location>
        <position position="63"/>
    </location>
</feature>
<feature type="disulfide bond" evidence="6 13 14 15">
    <location>
        <begin position="35"/>
        <end position="47"/>
    </location>
</feature>
<feature type="disulfide bond" evidence="6 13 14 15">
    <location>
        <begin position="40"/>
        <end position="54"/>
    </location>
</feature>
<feature type="disulfide bond" evidence="6 13 14 15">
    <location>
        <begin position="57"/>
        <end position="77"/>
    </location>
</feature>
<feature type="disulfide bond" evidence="6 13 14 15">
    <location>
        <begin position="61"/>
        <end position="73"/>
    </location>
</feature>
<feature type="mutagenesis site" description="Abrogates binding to egr, probably due to disruption of the hydrophobic core. Abrogates egr-induced apoptosis in wing imaginal discs." evidence="6">
    <original>F</original>
    <variation>A</variation>
    <location>
        <position position="46"/>
    </location>
</feature>
<feature type="mutagenesis site" description="Abrogates binding to egr." evidence="6">
    <original>T</original>
    <variation>A</variation>
    <location>
        <position position="51"/>
    </location>
</feature>
<feature type="mutagenesis site" description="Partially impairs association with egr." evidence="6">
    <original>E</original>
    <variation>A</variation>
    <location>
        <position position="52"/>
    </location>
</feature>
<feature type="mutagenesis site" description="Loss of glycosylation. Increases ligand affinity for the TNF egr." evidence="5 7">
    <original>N</original>
    <variation>A</variation>
    <location>
        <position position="63"/>
    </location>
</feature>
<feature type="mutagenesis site" description="Abrogates binding to egr. Abrogates egr-induced apoptosis in wing imaginal discs." evidence="6">
    <original>HN</original>
    <variation>AA</variation>
    <location>
        <begin position="66"/>
        <end position="67"/>
    </location>
</feature>
<feature type="mutagenesis site" description="Partially impairs association with egr. Partially impairs egr-induced apoptosis in wing imaginal discs." evidence="6">
    <original>H</original>
    <variation>A</variation>
    <location>
        <position position="66"/>
    </location>
</feature>
<feature type="mutagenesis site" description="Partially impairs association with egr." evidence="6">
    <original>N</original>
    <variation>A</variation>
    <location>
        <position position="67"/>
    </location>
</feature>
<feature type="helix" evidence="16">
    <location>
        <begin position="35"/>
        <end position="37"/>
    </location>
</feature>
<feature type="turn" evidence="16">
    <location>
        <begin position="42"/>
        <end position="44"/>
    </location>
</feature>
<feature type="strand" evidence="16">
    <location>
        <begin position="45"/>
        <end position="48"/>
    </location>
</feature>
<feature type="turn" evidence="16">
    <location>
        <begin position="49"/>
        <end position="52"/>
    </location>
</feature>
<feature type="strand" evidence="16">
    <location>
        <begin position="53"/>
        <end position="56"/>
    </location>
</feature>
<feature type="helix" evidence="16">
    <location>
        <begin position="57"/>
        <end position="61"/>
    </location>
</feature>
<feature type="helix" evidence="16">
    <location>
        <begin position="70"/>
        <end position="76"/>
    </location>
</feature>
<feature type="turn" evidence="16">
    <location>
        <begin position="77"/>
        <end position="80"/>
    </location>
</feature>
<proteinExistence type="evidence at protein level"/>
<sequence>MSVRKLSALSLSIGGVPLIPSVSLVAAANGESRDCHGTICHPVNEFCYVATERCHPCIEVCNNQTHNYDAFLCAKECSAYKTFEPLKAEMLDIQNTQQLILLLLTILLVLIALRCAFQFLRWLIGNRCFQKLMRRLQSKAYPHPATANGKDLNATTIQNLNAINHPGSDLERAQSQIYSVAGAAEGSVVTMTTPVSTRYPAENSTTPTTVMTEIGYGYDNQAMVVTPVSEKPSAATIPVAF</sequence>
<comment type="function">
    <text evidence="3 4 6 7">Acts as a receptor for TNF-cytokine egr (PubMed:25874673, PubMed:27076079, PubMed:33824334). Plays a role in activation of JNK signaling and is required for egr-induced apoptosis, including in wing imaginal discs during development (PubMed:25874673, PubMed:33824334). May also play an egr-independent role in cell proliferation (PubMed:25874673). TNF receptor involved in triggering JNK-dependent proliferation of the enteroblast-enterocyte lineage in response to stress-induced release of egr by intestinal stem cells and enteroblasts (PubMed:38944657). Involved in regulation of insulin production in response to dietary protein shortage keeping systemic growth in check (PubMed:27076079). Activation in brain insulin producing cells through binding of egr released into the hemolymph in response to dietary amino acid shortage, results in JNK-dependent inhibition of insulin production (PubMed:27076079).</text>
</comment>
<comment type="subunit">
    <text evidence="3 6">Interacts (via extracellular cysteine-rich domain) with egr (via secreted TNF-homology soluble form); forms heterohexamers when 3 copies associate with egr trimers (PubMed:25874673, PubMed:33824334). Interacts with Traf6/TRAF2 and veli (via PDZ domain) (PubMed:25874673).</text>
</comment>
<comment type="interaction">
    <interactant intactId="EBI-164007">
        <id>Q9VJ83</id>
    </interactant>
    <interactant intactId="EBI-108054">
        <id>Q8MUJ1</id>
        <label>egr</label>
    </interactant>
    <organismsDiffer>false</organismsDiffer>
    <experiments>4</experiments>
</comment>
<comment type="interaction">
    <interactant intactId="EBI-164007">
        <id>Q9VJ83</id>
    </interactant>
    <interactant intactId="EBI-88690">
        <id>Q9W3I9</id>
        <label>Traf6</label>
    </interactant>
    <organismsDiffer>false</organismsDiffer>
    <experiments>2</experiments>
</comment>
<comment type="interaction">
    <interactant intactId="EBI-164007">
        <id>Q9VJ83</id>
    </interactant>
    <interactant intactId="EBI-91754">
        <id>Q9VBY7</id>
        <label>veli</label>
    </interactant>
    <organismsDiffer>false</organismsDiffer>
    <experiments>3</experiments>
</comment>
<comment type="subcellular location">
    <subcellularLocation>
        <location evidence="3 6">Apical cell membrane</location>
        <topology evidence="9">Single-pass type I membrane protein</topology>
    </subcellularLocation>
    <subcellularLocation>
        <location evidence="6">Cytoplasmic vesicle membrane</location>
        <topology evidence="9">Single-pass type I membrane protein</topology>
    </subcellularLocation>
    <text evidence="6">In wing imaginal discs primarily localizes to the cell membrane but internalizes into intracellular vesicles upon binding egr.</text>
</comment>
<comment type="tissue specificity">
    <text evidence="7">Expressed in the adult midgut; under normal conditions expressed at lower levels than the other TNF receptor wgn.</text>
</comment>
<comment type="developmental stage">
    <text evidence="4">Specifically expressed in insulin producing cells of the larval brain.</text>
</comment>
<comment type="induction">
    <text evidence="7">By bacterial infection in the gut.</text>
</comment>
<comment type="PTM">
    <text evidence="5 7">N-glycosylated on Asn-63 (PubMed:29870719). Glycosylation regulates ligand binding, specifically reducing affinity for the TNF egr, thereby inhibiting activation of JNK signaling (PubMed:29870719, PubMed:38944657).</text>
</comment>
<comment type="disruption phenotype">
    <text evidence="4 7">RNAi-mediated knockdown in gut progenitor cells, enterocytes or cells of the enteroblast-enterocyte lineage decreases stress-induced intestinal stem cell proliferation (PubMed:38944657). RNAi-mediated knockdown in insulin producing cells of the brain mitigates body size reduction in animals fed a low-protein diet (PubMed:27076079).</text>
</comment>
<comment type="miscellaneous">
    <text evidence="8">The name 'grindelwald' comes from the village at the foot of the Eiger mountain in Switzerland after which the TNF gene egr is named.</text>
</comment>
<name>GRND_DROME</name>
<gene>
    <name evidence="8" type="primary">grnd</name>
    <name evidence="11" type="ORF">CG10176</name>
</gene>
<evidence type="ECO:0000255" key="1"/>
<evidence type="ECO:0000255" key="2">
    <source>
        <dbReference type="PROSITE-ProRule" id="PRU00498"/>
    </source>
</evidence>
<evidence type="ECO:0000269" key="3">
    <source>
    </source>
</evidence>
<evidence type="ECO:0000269" key="4">
    <source>
    </source>
</evidence>
<evidence type="ECO:0000269" key="5">
    <source>
    </source>
</evidence>
<evidence type="ECO:0000269" key="6">
    <source>
    </source>
</evidence>
<evidence type="ECO:0000269" key="7">
    <source>
    </source>
</evidence>
<evidence type="ECO:0000303" key="8">
    <source>
    </source>
</evidence>
<evidence type="ECO:0000305" key="9"/>
<evidence type="ECO:0000312" key="10">
    <source>
        <dbReference type="EMBL" id="AAL89884.1"/>
    </source>
</evidence>
<evidence type="ECO:0000312" key="11">
    <source>
        <dbReference type="FlyBase" id="FBgn0032682"/>
    </source>
</evidence>
<evidence type="ECO:0000312" key="12">
    <source>
        <dbReference type="Proteomes" id="UP000000803"/>
    </source>
</evidence>
<evidence type="ECO:0007744" key="13">
    <source>
        <dbReference type="PDB" id="6ZSY"/>
    </source>
</evidence>
<evidence type="ECO:0007744" key="14">
    <source>
        <dbReference type="PDB" id="6ZSZ"/>
    </source>
</evidence>
<evidence type="ECO:0007744" key="15">
    <source>
        <dbReference type="PDB" id="6ZT0"/>
    </source>
</evidence>
<evidence type="ECO:0007829" key="16">
    <source>
        <dbReference type="PDB" id="6ZSY"/>
    </source>
</evidence>
<organism evidence="12">
    <name type="scientific">Drosophila melanogaster</name>
    <name type="common">Fruit fly</name>
    <dbReference type="NCBI Taxonomy" id="7227"/>
    <lineage>
        <taxon>Eukaryota</taxon>
        <taxon>Metazoa</taxon>
        <taxon>Ecdysozoa</taxon>
        <taxon>Arthropoda</taxon>
        <taxon>Hexapoda</taxon>
        <taxon>Insecta</taxon>
        <taxon>Pterygota</taxon>
        <taxon>Neoptera</taxon>
        <taxon>Endopterygota</taxon>
        <taxon>Diptera</taxon>
        <taxon>Brachycera</taxon>
        <taxon>Muscomorpha</taxon>
        <taxon>Ephydroidea</taxon>
        <taxon>Drosophilidae</taxon>
        <taxon>Drosophila</taxon>
        <taxon>Sophophora</taxon>
    </lineage>
</organism>
<reference evidence="12" key="1">
    <citation type="journal article" date="2000" name="Science">
        <title>The genome sequence of Drosophila melanogaster.</title>
        <authorList>
            <person name="Adams M.D."/>
            <person name="Celniker S.E."/>
            <person name="Holt R.A."/>
            <person name="Evans C.A."/>
            <person name="Gocayne J.D."/>
            <person name="Amanatides P.G."/>
            <person name="Scherer S.E."/>
            <person name="Li P.W."/>
            <person name="Hoskins R.A."/>
            <person name="Galle R.F."/>
            <person name="George R.A."/>
            <person name="Lewis S.E."/>
            <person name="Richards S."/>
            <person name="Ashburner M."/>
            <person name="Henderson S.N."/>
            <person name="Sutton G.G."/>
            <person name="Wortman J.R."/>
            <person name="Yandell M.D."/>
            <person name="Zhang Q."/>
            <person name="Chen L.X."/>
            <person name="Brandon R.C."/>
            <person name="Rogers Y.-H.C."/>
            <person name="Blazej R.G."/>
            <person name="Champe M."/>
            <person name="Pfeiffer B.D."/>
            <person name="Wan K.H."/>
            <person name="Doyle C."/>
            <person name="Baxter E.G."/>
            <person name="Helt G."/>
            <person name="Nelson C.R."/>
            <person name="Miklos G.L.G."/>
            <person name="Abril J.F."/>
            <person name="Agbayani A."/>
            <person name="An H.-J."/>
            <person name="Andrews-Pfannkoch C."/>
            <person name="Baldwin D."/>
            <person name="Ballew R.M."/>
            <person name="Basu A."/>
            <person name="Baxendale J."/>
            <person name="Bayraktaroglu L."/>
            <person name="Beasley E.M."/>
            <person name="Beeson K.Y."/>
            <person name="Benos P.V."/>
            <person name="Berman B.P."/>
            <person name="Bhandari D."/>
            <person name="Bolshakov S."/>
            <person name="Borkova D."/>
            <person name="Botchan M.R."/>
            <person name="Bouck J."/>
            <person name="Brokstein P."/>
            <person name="Brottier P."/>
            <person name="Burtis K.C."/>
            <person name="Busam D.A."/>
            <person name="Butler H."/>
            <person name="Cadieu E."/>
            <person name="Center A."/>
            <person name="Chandra I."/>
            <person name="Cherry J.M."/>
            <person name="Cawley S."/>
            <person name="Dahlke C."/>
            <person name="Davenport L.B."/>
            <person name="Davies P."/>
            <person name="de Pablos B."/>
            <person name="Delcher A."/>
            <person name="Deng Z."/>
            <person name="Mays A.D."/>
            <person name="Dew I."/>
            <person name="Dietz S.M."/>
            <person name="Dodson K."/>
            <person name="Doup L.E."/>
            <person name="Downes M."/>
            <person name="Dugan-Rocha S."/>
            <person name="Dunkov B.C."/>
            <person name="Dunn P."/>
            <person name="Durbin K.J."/>
            <person name="Evangelista C.C."/>
            <person name="Ferraz C."/>
            <person name="Ferriera S."/>
            <person name="Fleischmann W."/>
            <person name="Fosler C."/>
            <person name="Gabrielian A.E."/>
            <person name="Garg N.S."/>
            <person name="Gelbart W.M."/>
            <person name="Glasser K."/>
            <person name="Glodek A."/>
            <person name="Gong F."/>
            <person name="Gorrell J.H."/>
            <person name="Gu Z."/>
            <person name="Guan P."/>
            <person name="Harris M."/>
            <person name="Harris N.L."/>
            <person name="Harvey D.A."/>
            <person name="Heiman T.J."/>
            <person name="Hernandez J.R."/>
            <person name="Houck J."/>
            <person name="Hostin D."/>
            <person name="Houston K.A."/>
            <person name="Howland T.J."/>
            <person name="Wei M.-H."/>
            <person name="Ibegwam C."/>
            <person name="Jalali M."/>
            <person name="Kalush F."/>
            <person name="Karpen G.H."/>
            <person name="Ke Z."/>
            <person name="Kennison J.A."/>
            <person name="Ketchum K.A."/>
            <person name="Kimmel B.E."/>
            <person name="Kodira C.D."/>
            <person name="Kraft C.L."/>
            <person name="Kravitz S."/>
            <person name="Kulp D."/>
            <person name="Lai Z."/>
            <person name="Lasko P."/>
            <person name="Lei Y."/>
            <person name="Levitsky A.A."/>
            <person name="Li J.H."/>
            <person name="Li Z."/>
            <person name="Liang Y."/>
            <person name="Lin X."/>
            <person name="Liu X."/>
            <person name="Mattei B."/>
            <person name="McIntosh T.C."/>
            <person name="McLeod M.P."/>
            <person name="McPherson D."/>
            <person name="Merkulov G."/>
            <person name="Milshina N.V."/>
            <person name="Mobarry C."/>
            <person name="Morris J."/>
            <person name="Moshrefi A."/>
            <person name="Mount S.M."/>
            <person name="Moy M."/>
            <person name="Murphy B."/>
            <person name="Murphy L."/>
            <person name="Muzny D.M."/>
            <person name="Nelson D.L."/>
            <person name="Nelson D.R."/>
            <person name="Nelson K.A."/>
            <person name="Nixon K."/>
            <person name="Nusskern D.R."/>
            <person name="Pacleb J.M."/>
            <person name="Palazzolo M."/>
            <person name="Pittman G.S."/>
            <person name="Pan S."/>
            <person name="Pollard J."/>
            <person name="Puri V."/>
            <person name="Reese M.G."/>
            <person name="Reinert K."/>
            <person name="Remington K."/>
            <person name="Saunders R.D.C."/>
            <person name="Scheeler F."/>
            <person name="Shen H."/>
            <person name="Shue B.C."/>
            <person name="Siden-Kiamos I."/>
            <person name="Simpson M."/>
            <person name="Skupski M.P."/>
            <person name="Smith T.J."/>
            <person name="Spier E."/>
            <person name="Spradling A.C."/>
            <person name="Stapleton M."/>
            <person name="Strong R."/>
            <person name="Sun E."/>
            <person name="Svirskas R."/>
            <person name="Tector C."/>
            <person name="Turner R."/>
            <person name="Venter E."/>
            <person name="Wang A.H."/>
            <person name="Wang X."/>
            <person name="Wang Z.-Y."/>
            <person name="Wassarman D.A."/>
            <person name="Weinstock G.M."/>
            <person name="Weissenbach J."/>
            <person name="Williams S.M."/>
            <person name="Woodage T."/>
            <person name="Worley K.C."/>
            <person name="Wu D."/>
            <person name="Yang S."/>
            <person name="Yao Q.A."/>
            <person name="Ye J."/>
            <person name="Yeh R.-F."/>
            <person name="Zaveri J.S."/>
            <person name="Zhan M."/>
            <person name="Zhang G."/>
            <person name="Zhao Q."/>
            <person name="Zheng L."/>
            <person name="Zheng X.H."/>
            <person name="Zhong F.N."/>
            <person name="Zhong W."/>
            <person name="Zhou X."/>
            <person name="Zhu S.C."/>
            <person name="Zhu X."/>
            <person name="Smith H.O."/>
            <person name="Gibbs R.A."/>
            <person name="Myers E.W."/>
            <person name="Rubin G.M."/>
            <person name="Venter J.C."/>
        </authorList>
    </citation>
    <scope>NUCLEOTIDE SEQUENCE [LARGE SCALE GENOMIC DNA]</scope>
    <source>
        <strain evidence="12">Berkeley</strain>
    </source>
</reference>
<reference evidence="12" key="2">
    <citation type="journal article" date="2002" name="Genome Biol.">
        <title>Annotation of the Drosophila melanogaster euchromatic genome: a systematic review.</title>
        <authorList>
            <person name="Misra S."/>
            <person name="Crosby M.A."/>
            <person name="Mungall C.J."/>
            <person name="Matthews B.B."/>
            <person name="Campbell K.S."/>
            <person name="Hradecky P."/>
            <person name="Huang Y."/>
            <person name="Kaminker J.S."/>
            <person name="Millburn G.H."/>
            <person name="Prochnik S.E."/>
            <person name="Smith C.D."/>
            <person name="Tupy J.L."/>
            <person name="Whitfield E.J."/>
            <person name="Bayraktaroglu L."/>
            <person name="Berman B.P."/>
            <person name="Bettencourt B.R."/>
            <person name="Celniker S.E."/>
            <person name="de Grey A.D.N.J."/>
            <person name="Drysdale R.A."/>
            <person name="Harris N.L."/>
            <person name="Richter J."/>
            <person name="Russo S."/>
            <person name="Schroeder A.J."/>
            <person name="Shu S.Q."/>
            <person name="Stapleton M."/>
            <person name="Yamada C."/>
            <person name="Ashburner M."/>
            <person name="Gelbart W.M."/>
            <person name="Rubin G.M."/>
            <person name="Lewis S.E."/>
        </authorList>
    </citation>
    <scope>GENOME REANNOTATION</scope>
    <source>
        <strain evidence="12">Berkeley</strain>
    </source>
</reference>
<reference evidence="10" key="3">
    <citation type="submission" date="2002-03" db="EMBL/GenBank/DDBJ databases">
        <authorList>
            <person name="Stapleton M."/>
            <person name="Brokstein P."/>
            <person name="Hong L."/>
            <person name="Agbayani A."/>
            <person name="Carlson J."/>
            <person name="Champe M."/>
            <person name="Chavez C."/>
            <person name="Dorsett V."/>
            <person name="Dresnek D."/>
            <person name="Farfan D."/>
            <person name="Frise E."/>
            <person name="George R."/>
            <person name="Gonzalez M."/>
            <person name="Guarin H."/>
            <person name="Kronmiller B."/>
            <person name="Li P."/>
            <person name="Liao G."/>
            <person name="Miranda A."/>
            <person name="Mungall C.J."/>
            <person name="Nunoo J."/>
            <person name="Pacleb J."/>
            <person name="Paragas V."/>
            <person name="Park S."/>
            <person name="Patel S."/>
            <person name="Phouanenavong S."/>
            <person name="Wan K."/>
            <person name="Yu C."/>
            <person name="Lewis S.E."/>
            <person name="Rubin G.M."/>
            <person name="Celniker S."/>
        </authorList>
    </citation>
    <scope>NUCLEOTIDE SEQUENCE [LARGE SCALE MRNA]</scope>
    <source>
        <strain evidence="10">Berkeley</strain>
        <tissue evidence="10">Embryo</tissue>
    </source>
</reference>
<reference evidence="9" key="4">
    <citation type="journal article" date="2015" name="Nature">
        <title>The Drosophila TNF receptor Grindelwald couples loss of cell polarity and neoplastic growth.</title>
        <authorList>
            <person name="Andersen D.S."/>
            <person name="Colombani J."/>
            <person name="Palmerini V."/>
            <person name="Chakrabandhu K."/>
            <person name="Boone E."/>
            <person name="Roethlisberger M."/>
            <person name="Toggweiler J."/>
            <person name="Basler K."/>
            <person name="Mapelli M."/>
            <person name="Hueber A.O."/>
            <person name="Leopold P."/>
        </authorList>
    </citation>
    <scope>FUNCTION</scope>
    <scope>INTERACTION WITH EGR; TRAF6 AND VELI</scope>
    <scope>SUBCELLULAR LOCATION</scope>
</reference>
<reference key="5">
    <citation type="journal article" date="2016" name="Cell Metab.">
        <title>The Drosophila TNF Eiger Is an Adipokine that Acts on Insulin-Producing Cells to Mediate Nutrient Response.</title>
        <authorList>
            <person name="Agrawal N."/>
            <person name="Delanoue R."/>
            <person name="Mauri A."/>
            <person name="Basco D."/>
            <person name="Pasco M."/>
            <person name="Thorens B."/>
            <person name="Leopold P."/>
        </authorList>
    </citation>
    <scope>FUNCTION</scope>
    <scope>DEVELOPMENTAL STAGE</scope>
    <scope>DISRUPTION PHENOTYPE</scope>
</reference>
<reference key="6">
    <citation type="journal article" date="2018" name="Dev. Cell">
        <title>A Drosophila Tumor Suppressor Gene Prevents Tonic TNF Signaling through Receptor N-Glycosylation.</title>
        <authorList>
            <person name="de Vreede G."/>
            <person name="Morrison H.A."/>
            <person name="Houser A.M."/>
            <person name="Boileau R.M."/>
            <person name="Andersen D."/>
            <person name="Colombani J."/>
            <person name="Bilder D."/>
        </authorList>
    </citation>
    <scope>GLYCOSYLATION AT ASN-63</scope>
    <scope>MUTAGENESIS OF ASN-63</scope>
</reference>
<reference key="7">
    <citation type="journal article" date="2024" name="Nat. Commun.">
        <title>Inter-cell type interactions that control JNK signaling in the Drosophila intestine.</title>
        <authorList>
            <person name="Zhang P."/>
            <person name="Pronovost S.M."/>
            <person name="Marchetti M."/>
            <person name="Zhang C."/>
            <person name="Kang X."/>
            <person name="Kandelouei T."/>
            <person name="Li C."/>
            <person name="Edgar B.A."/>
        </authorList>
    </citation>
    <scope>FUNCTION</scope>
    <scope>TISSUE SPECIFICITY</scope>
    <scope>INDUCTION BY BACTERIAL INFECTION</scope>
    <scope>GLYCOSYLATION AT ASN-63</scope>
    <scope>DISRUPTION PHENOTYPE</scope>
    <scope>MUTAGENESIS OF ASN-63</scope>
</reference>
<reference evidence="13 14 15" key="8">
    <citation type="journal article" date="2021" name="Nat. Commun.">
        <title>Drosophila TNFRs Grindelwald and Wengen bind Eiger with different affinities and promote distinct cellular functions.</title>
        <authorList>
            <person name="Palmerini V."/>
            <person name="Monzani S."/>
            <person name="Laurichesse Q."/>
            <person name="Loudhaief R."/>
            <person name="Mari S."/>
            <person name="Cecatiello V."/>
            <person name="Olieric V."/>
            <person name="Pasqualato S."/>
            <person name="Colombani J."/>
            <person name="Andersen D.S."/>
            <person name="Mapelli M."/>
        </authorList>
    </citation>
    <scope>X-RAY CRYSTALLOGRAPHY (0.93 ANGSTROMS) OF 30-81 IN COMPLEX WITH EGR</scope>
    <scope>FUNCTION</scope>
    <scope>INTERACTION WITH EGR</scope>
    <scope>SUBCELLULAR LOCATION</scope>
    <scope>DISULFIDE BONDS</scope>
    <scope>MUTAGENESIS OF PHE-46; THR-51; GLU-52; 66-HIS-ASN-67; HIS-66 AND ASN-67</scope>
</reference>
<accession>Q9VJ83</accession>
<accession>Q8SXT4</accession>
<dbReference type="EMBL" id="AE014134">
    <property type="protein sequence ID" value="AAF53671.2"/>
    <property type="molecule type" value="Genomic_DNA"/>
</dbReference>
<dbReference type="EMBL" id="AE014134">
    <property type="protein sequence ID" value="AGB93073.1"/>
    <property type="molecule type" value="Genomic_DNA"/>
</dbReference>
<dbReference type="EMBL" id="AY084146">
    <property type="protein sequence ID" value="AAL89884.1"/>
    <property type="molecule type" value="mRNA"/>
</dbReference>
<dbReference type="RefSeq" id="NP_001260538.1">
    <property type="nucleotide sequence ID" value="NM_001273609.1"/>
</dbReference>
<dbReference type="RefSeq" id="NP_609880.2">
    <property type="nucleotide sequence ID" value="NM_136036.4"/>
</dbReference>
<dbReference type="PDB" id="6ZSY">
    <property type="method" value="X-ray"/>
    <property type="resolution" value="0.93 A"/>
    <property type="chains" value="A=30-81"/>
</dbReference>
<dbReference type="PDB" id="6ZSZ">
    <property type="method" value="X-ray"/>
    <property type="resolution" value="1.92 A"/>
    <property type="chains" value="A=30-81"/>
</dbReference>
<dbReference type="PDB" id="6ZT0">
    <property type="method" value="X-ray"/>
    <property type="resolution" value="2.02 A"/>
    <property type="chains" value="AAAA=30-81"/>
</dbReference>
<dbReference type="PDBsum" id="6ZSY"/>
<dbReference type="PDBsum" id="6ZSZ"/>
<dbReference type="PDBsum" id="6ZT0"/>
<dbReference type="SMR" id="Q9VJ83"/>
<dbReference type="DIP" id="DIP-61584N"/>
<dbReference type="FunCoup" id="Q9VJ83">
    <property type="interactions" value="61"/>
</dbReference>
<dbReference type="IntAct" id="Q9VJ83">
    <property type="interactions" value="5"/>
</dbReference>
<dbReference type="STRING" id="7227.FBpp0304599"/>
<dbReference type="GlyCosmos" id="Q9VJ83">
    <property type="glycosylation" value="1 site, No reported glycans"/>
</dbReference>
<dbReference type="GlyGen" id="Q9VJ83">
    <property type="glycosylation" value="1 site"/>
</dbReference>
<dbReference type="PaxDb" id="7227-FBpp0304599"/>
<dbReference type="DNASU" id="35103"/>
<dbReference type="EnsemblMetazoa" id="FBtr0300674">
    <property type="protein sequence ID" value="FBpp0289898"/>
    <property type="gene ID" value="FBgn0032682"/>
</dbReference>
<dbReference type="EnsemblMetazoa" id="FBtr0332321">
    <property type="protein sequence ID" value="FBpp0304599"/>
    <property type="gene ID" value="FBgn0032682"/>
</dbReference>
<dbReference type="GeneID" id="35103"/>
<dbReference type="KEGG" id="dme:Dmel_CG10176"/>
<dbReference type="UCSC" id="CG10176-RA">
    <property type="organism name" value="d. melanogaster"/>
</dbReference>
<dbReference type="AGR" id="FB:FBgn0032682"/>
<dbReference type="CTD" id="35103"/>
<dbReference type="FlyBase" id="FBgn0032682">
    <property type="gene designation" value="grnd"/>
</dbReference>
<dbReference type="VEuPathDB" id="VectorBase:FBgn0032682"/>
<dbReference type="eggNOG" id="ENOG502SE1N">
    <property type="taxonomic scope" value="Eukaryota"/>
</dbReference>
<dbReference type="HOGENOM" id="CLU_1166904_0_0_1"/>
<dbReference type="InParanoid" id="Q9VJ83"/>
<dbReference type="OMA" id="CHAVSEY"/>
<dbReference type="OrthoDB" id="6599193at2759"/>
<dbReference type="PhylomeDB" id="Q9VJ83"/>
<dbReference type="BioGRID-ORCS" id="35103">
    <property type="hits" value="0 hits in 1 CRISPR screen"/>
</dbReference>
<dbReference type="GenomeRNAi" id="35103"/>
<dbReference type="PRO" id="PR:Q9VJ83"/>
<dbReference type="Proteomes" id="UP000000803">
    <property type="component" value="Chromosome 2L"/>
</dbReference>
<dbReference type="Bgee" id="FBgn0032682">
    <property type="expression patterns" value="Expressed in wing disc and 62 other cell types or tissues"/>
</dbReference>
<dbReference type="GO" id="GO:0016324">
    <property type="term" value="C:apical plasma membrane"/>
    <property type="evidence" value="ECO:0007669"/>
    <property type="project" value="UniProtKB-SubCell"/>
</dbReference>
<dbReference type="GO" id="GO:0005886">
    <property type="term" value="C:plasma membrane"/>
    <property type="evidence" value="ECO:0000314"/>
    <property type="project" value="FlyBase"/>
</dbReference>
<dbReference type="GO" id="GO:0005031">
    <property type="term" value="F:tumor necrosis factor receptor activity"/>
    <property type="evidence" value="ECO:0000314"/>
    <property type="project" value="FlyBase"/>
</dbReference>
<dbReference type="GO" id="GO:1903427">
    <property type="term" value="P:negative regulation of reactive oxygen species biosynthetic process"/>
    <property type="evidence" value="ECO:0000315"/>
    <property type="project" value="FlyBase"/>
</dbReference>
<dbReference type="GO" id="GO:0046330">
    <property type="term" value="P:positive regulation of JNK cascade"/>
    <property type="evidence" value="ECO:0000315"/>
    <property type="project" value="FlyBase"/>
</dbReference>
<dbReference type="GO" id="GO:0043068">
    <property type="term" value="P:positive regulation of programmed cell death"/>
    <property type="evidence" value="ECO:0000315"/>
    <property type="project" value="FlyBase"/>
</dbReference>
<dbReference type="GO" id="GO:0033209">
    <property type="term" value="P:tumor necrosis factor-mediated signaling pathway"/>
    <property type="evidence" value="ECO:0000315"/>
    <property type="project" value="FlyBase"/>
</dbReference>